<name>CTB6_CERNC</name>
<protein>
    <recommendedName>
        <fullName evidence="11">Ketoreductase CTB6</fullName>
        <ecNumber evidence="13">1.-.-.-</ecNumber>
    </recommendedName>
    <alternativeName>
        <fullName evidence="11">Cercosporin toxin biosynthesis cluster protein 6</fullName>
    </alternativeName>
</protein>
<feature type="chain" id="PRO_0000444970" description="Ketoreductase CTB6">
    <location>
        <begin position="1"/>
        <end position="357"/>
    </location>
</feature>
<feature type="binding site" evidence="1">
    <location>
        <position position="172"/>
    </location>
    <ligand>
        <name>NADP(+)</name>
        <dbReference type="ChEBI" id="CHEBI:58349"/>
    </ligand>
</feature>
<evidence type="ECO:0000250" key="1">
    <source>
        <dbReference type="UniProtKB" id="A0A059TC02"/>
    </source>
</evidence>
<evidence type="ECO:0000250" key="2">
    <source>
        <dbReference type="UniProtKB" id="Q0UHZ9"/>
    </source>
</evidence>
<evidence type="ECO:0000269" key="3">
    <source>
    </source>
</evidence>
<evidence type="ECO:0000269" key="4">
    <source>
    </source>
</evidence>
<evidence type="ECO:0000269" key="5">
    <source>
    </source>
</evidence>
<evidence type="ECO:0000269" key="6">
    <source>
    </source>
</evidence>
<evidence type="ECO:0000269" key="7">
    <source>
    </source>
</evidence>
<evidence type="ECO:0000269" key="8">
    <source>
    </source>
</evidence>
<evidence type="ECO:0000269" key="9">
    <source>
    </source>
</evidence>
<evidence type="ECO:0000303" key="10">
    <source>
    </source>
</evidence>
<evidence type="ECO:0000303" key="11">
    <source>
    </source>
</evidence>
<evidence type="ECO:0000305" key="12"/>
<evidence type="ECO:0000305" key="13">
    <source>
    </source>
</evidence>
<reference key="1">
    <citation type="journal article" date="2007" name="Microbiology (Mosc.)">
        <title>Functional characterization of three genes encoding putative oxidoreductases required for cercosporin toxin biosynthesis in the fungus Cercospora nicotianae.</title>
        <authorList>
            <person name="Chen H.Q."/>
            <person name="Lee M.H."/>
            <person name="Chung K.R."/>
        </authorList>
    </citation>
    <scope>NUCLEOTIDE SEQUENCE [GENOMIC DNA]</scope>
    <scope>FUNCTION</scope>
    <scope>DISRUPTION PHENOTYPE</scope>
    <scope>PATHWAY</scope>
</reference>
<reference key="2">
    <citation type="journal article" date="2007" name="Mol. Microbiol.">
        <title>Molecular analysis of the cercosporin biosynthetic gene cluster in Cercospora nicotianae.</title>
        <authorList>
            <person name="Chen H."/>
            <person name="Lee M.H."/>
            <person name="Daub M.E."/>
            <person name="Chung K.R."/>
        </authorList>
    </citation>
    <scope>NUCLEOTIDE SEQUENCE [GENOMIC DNA]</scope>
    <scope>FUNCTION</scope>
    <scope>INDUCTION</scope>
    <scope>PATHWAY</scope>
</reference>
<reference key="3">
    <citation type="journal article" date="2000" name="Annu. Rev. Phytopathol.">
        <title>The photoactivated cercospora toxin cercosporin: contributions to plant disease and fundamental biology.</title>
        <authorList>
            <person name="Daub M.E."/>
            <person name="Ehrenshaft M."/>
        </authorList>
    </citation>
    <scope>REVIEW ON CERCOSPORIN</scope>
</reference>
<reference key="4">
    <citation type="journal article" date="2005" name="Mol. Plant Microbe Interact.">
        <title>The CTB1 gene encoding a fungal polyketide synthase is required for cercosporin biosynthesis and fungal virulence of Cercospora nicotianae.</title>
        <authorList>
            <person name="Choquer M."/>
            <person name="Dekkers K.L."/>
            <person name="Chen H.Q."/>
            <person name="Cao L."/>
            <person name="Ueng P.P."/>
            <person name="Daub M.E."/>
            <person name="Chung K.R."/>
        </authorList>
    </citation>
    <scope>FUNCTION</scope>
</reference>
<reference key="5">
    <citation type="journal article" date="2007" name="Fungal Genet. Biol.">
        <title>The Cercospora nicotianae gene encoding dual O-methyltransferase and FAD-dependent monooxygenase domains mediates cercosporin toxin biosynthesis.</title>
        <authorList>
            <person name="Dekkers K.L."/>
            <person name="You B.J."/>
            <person name="Gowda V.S."/>
            <person name="Liao H.L."/>
            <person name="Lee M.H."/>
            <person name="Bau H.J."/>
            <person name="Ueng P.P."/>
            <person name="Chung K.R."/>
        </authorList>
    </citation>
    <scope>FUNCTION</scope>
</reference>
<reference key="6">
    <citation type="journal article" date="2012" name="Chem. Commun. (Camb.)">
        <title>Analysis of the cercosporin polyketide synthase CTB1 reveals a new fungal thioesterase function.</title>
        <authorList>
            <person name="Newman A.G."/>
            <person name="Vagstad A.L."/>
            <person name="Belecki K."/>
            <person name="Scheerer J.R."/>
            <person name="Townsend C.A."/>
        </authorList>
    </citation>
    <scope>FUNCTION</scope>
</reference>
<reference key="7">
    <citation type="journal article" date="2016" name="J. Am. Chem. Soc.">
        <title>Molecular characterization of the cercosporin biosynthetic pathway in the fungal plant pathogen Cercospora nicotianae.</title>
        <authorList>
            <person name="Newman A.G."/>
            <person name="Townsend C.A."/>
        </authorList>
    </citation>
    <scope>FUNCTION</scope>
    <scope>DISRUPTION PHENOTYPE</scope>
    <scope>PATHWAY</scope>
</reference>
<reference key="8">
    <citation type="journal article" date="2019" name="Chem. Sci.">
        <title>Heterologous biosynthesis of elsinochrome A sheds light on the formation of the photosensitive perylenequinone system.</title>
        <authorList>
            <person name="Hu J."/>
            <person name="Sarrami F."/>
            <person name="Li H."/>
            <person name="Zhang G."/>
            <person name="Stubbs K.A."/>
            <person name="Lacey E."/>
            <person name="Stewart S.G."/>
            <person name="Karton A."/>
            <person name="Piggott A.M."/>
            <person name="Chooi Y.H."/>
        </authorList>
    </citation>
    <scope>FUNCTION</scope>
</reference>
<sequence>MADSLVLLTGATGFIGFRILVELLRQGYSVRAVIRSAAKGQWLESRLTAVMKGSDYKDRFQTTIVADFVTDGAFDQAAENTSYIIHVASPIVSSDNPDDWEHDFKRVAVKGSIGVLEAAKRSGTVRRVVITSSMVGLFSPKALFAEPSEVPLNAESRIPEMEPPYAHKMLAYQAGKIASINSAEAWIKHEKPAFDLIHMHPSFVTGRDDLATTREDLRKFSSNWHSMQIVLGHKNPIGKPILTCHNDDVARCHVSALDPKVAGNQSFLISCSPEDGSEWDNVKKIVQREFPEAVAQGVLPNDGHMPTVNKGVRFDVRKTEETFGFKHIPYEAQVLDVVKQYLELPEKDEGVEISTTA</sequence>
<proteinExistence type="evidence at transcript level"/>
<keyword id="KW-0521">NADP</keyword>
<keyword id="KW-0560">Oxidoreductase</keyword>
<comment type="function">
    <text evidence="2 3 4 6 7 8 9 10">Ketoreductase; part of the gene cluster that mediates the biosynthesis of cercosporin, a light-activated, non-host-selective toxin (PubMed:15915645, PubMed:17074519, PubMed:26938470). The perylenequinone chromophore of cercosporin absorbs light energy to attain an electronically-activated triplet state and produces active oxygen species such as the hydroxyl radical, superoxide, hydrogen peroxide or singlet oxygen upon reaction with oxygen molecules (PubMed:11701851). These reactive oxygen species cause damage to various cellular components including lipids, proteins and nucleic acids (PubMed:11701851). The first step of cercosporin biosynthesis is performed by the polyketide synthase CTB1 which catalyzes the formation of nor-toralactone (PubMed:23108075, PubMed:26938470). The starter unit acyltransferase (SAT) domain of CTB1 initiates polyketide extension by the selective utilization of acetyl-CoA, which is elongated to the heptaketide in the beta-ketoacyl synthase (KS) domain by successive condensations with six malonyl units introduced by the malonyl acyltransferase (MAT) domain. The product template (PT) domain catalyzes C4-C9 and C2-C11 aldol cyclizations and dehydrations to a trihydroxynaphthalene, which is thought to be delivered to the thioesterase (TE) domain for product release (PubMed:23108075). The bifunctional enzyme CTB3 then methylates nor-toralactone to toralactone before conducting an unusual oxidative aromatic ring opening (PubMed:17074519, PubMed:26938470). The O-methyltransferase CTB2 further methylates the nascent OH-6 of the CBT3 product, blocking further oxidation at this site before the reductase CTB6 reduces the 2-oxopropyl ketone at position C7, giving naphthalene (PubMed:17660442, PubMed:26938470). The FAD-dependent monooxygenase CTB5 in concert with the multicopper oxidase CTB12 are responsible for homodimerization of naphthalene with CTB7 installing the dioxepine moiety, finally producing cercosporin (PubMed:17660442, PubMed:26938470, PubMed:30809363). The fasciclin domain-containing protein CTB11 might act with CTB5 and CTB12 whereas the roles of CTB9 and CTB10 have still to be elucidated (By similarity).</text>
</comment>
<comment type="pathway">
    <text evidence="5 6 8">Mycotoxin biosynthesis.</text>
</comment>
<comment type="induction">
    <text evidence="5">Expression is positively regulated by the cercosporin cluster-specific transcription factor CTB8 (PubMed:17462021). Expression is also affected by nitrogen and carbon sources and pH, and is also controlled by another transcription activator, CRG1, previously shown to regulate cercosporin production and resistance (PubMed:17462021).</text>
</comment>
<comment type="disruption phenotype">
    <text evidence="6 8">Abolishes the production of cercosporin but accumulates the naphthoquinones called cercoquinone A and cercoquinone B (PubMed:17660442, PubMed:26938470). Leads to dark orange-red mycelia with significant export of colored compounds into the agar (PubMed:26938470).</text>
</comment>
<comment type="similarity">
    <text evidence="12">Belongs to the NAD(P)-dependent epimerase/dehydratase family. Dihydroflavonol-4-reductase subfamily.</text>
</comment>
<accession>A0ST44</accession>
<gene>
    <name evidence="11" type="primary">CTB6</name>
</gene>
<organism>
    <name type="scientific">Cercospora nicotianae</name>
    <name type="common">Barn spot disease fungus</name>
    <dbReference type="NCBI Taxonomy" id="29003"/>
    <lineage>
        <taxon>Eukaryota</taxon>
        <taxon>Fungi</taxon>
        <taxon>Dikarya</taxon>
        <taxon>Ascomycota</taxon>
        <taxon>Pezizomycotina</taxon>
        <taxon>Dothideomycetes</taxon>
        <taxon>Dothideomycetidae</taxon>
        <taxon>Mycosphaerellales</taxon>
        <taxon>Mycosphaerellaceae</taxon>
        <taxon>Cercospora</taxon>
    </lineage>
</organism>
<dbReference type="EC" id="1.-.-.-" evidence="13"/>
<dbReference type="EMBL" id="DQ991508">
    <property type="protein sequence ID" value="ABK64183.1"/>
    <property type="molecule type" value="Genomic_DNA"/>
</dbReference>
<dbReference type="SMR" id="A0ST44"/>
<dbReference type="PHI-base" id="PHI:1047"/>
<dbReference type="GO" id="GO:0016616">
    <property type="term" value="F:oxidoreductase activity, acting on the CH-OH group of donors, NAD or NADP as acceptor"/>
    <property type="evidence" value="ECO:0007669"/>
    <property type="project" value="TreeGrafter"/>
</dbReference>
<dbReference type="CDD" id="cd05227">
    <property type="entry name" value="AR_SDR_e"/>
    <property type="match status" value="1"/>
</dbReference>
<dbReference type="Gene3D" id="3.40.50.720">
    <property type="entry name" value="NAD(P)-binding Rossmann-like Domain"/>
    <property type="match status" value="1"/>
</dbReference>
<dbReference type="InterPro" id="IPR001509">
    <property type="entry name" value="Epimerase_deHydtase"/>
</dbReference>
<dbReference type="InterPro" id="IPR036291">
    <property type="entry name" value="NAD(P)-bd_dom_sf"/>
</dbReference>
<dbReference type="InterPro" id="IPR050425">
    <property type="entry name" value="NAD(P)_dehydrat-like"/>
</dbReference>
<dbReference type="PANTHER" id="PTHR10366">
    <property type="entry name" value="NAD DEPENDENT EPIMERASE/DEHYDRATASE"/>
    <property type="match status" value="1"/>
</dbReference>
<dbReference type="PANTHER" id="PTHR10366:SF564">
    <property type="entry name" value="STEROL-4-ALPHA-CARBOXYLATE 3-DEHYDROGENASE, DECARBOXYLATING"/>
    <property type="match status" value="1"/>
</dbReference>
<dbReference type="Pfam" id="PF01370">
    <property type="entry name" value="Epimerase"/>
    <property type="match status" value="1"/>
</dbReference>
<dbReference type="SUPFAM" id="SSF51735">
    <property type="entry name" value="NAD(P)-binding Rossmann-fold domains"/>
    <property type="match status" value="1"/>
</dbReference>